<evidence type="ECO:0000255" key="1">
    <source>
        <dbReference type="HAMAP-Rule" id="MF_01420"/>
    </source>
</evidence>
<name>WHIA_STAAM</name>
<sequence length="314" mass="35868">MSFASEMKNELTRIDVDEMNAKAELSALIRMNGALSLSNQQFVINVQTENATTARRIYSLIKRVFNVEVEILVRKKMKLKKNNIYICRTKMKAKEILDELGILKDGIFTHEIDHSMIQDDEMRRSYLRGAFLAGGSVNNPETSSYHLEIFSQNESHAEGLTKLMNSYELNAKHLERKKGSITYLKEAEKISDFLSLIGGYQALLKFEDVRIVRDMRNSVNRLVNCETANLNKTVSAAMKQVESIKLIDKEIGIENLPDRLREIARIRVEHQEISLKELGEMVSTGPISKSGVNHRLRKLNDLADKIRNGEQIEL</sequence>
<feature type="chain" id="PRO_0000376558" description="Probable cell division protein WhiA">
    <location>
        <begin position="1"/>
        <end position="314"/>
    </location>
</feature>
<feature type="DNA-binding region" description="H-T-H motif" evidence="1">
    <location>
        <begin position="274"/>
        <end position="308"/>
    </location>
</feature>
<comment type="function">
    <text evidence="1">Involved in cell division and chromosome segregation.</text>
</comment>
<comment type="similarity">
    <text evidence="1">Belongs to the WhiA family.</text>
</comment>
<dbReference type="EMBL" id="BA000017">
    <property type="protein sequence ID" value="BAB56929.1"/>
    <property type="molecule type" value="Genomic_DNA"/>
</dbReference>
<dbReference type="RefSeq" id="WP_000006551.1">
    <property type="nucleotide sequence ID" value="NC_002758.2"/>
</dbReference>
<dbReference type="SMR" id="Q7A2U9"/>
<dbReference type="KEGG" id="sav:SAV0767"/>
<dbReference type="HOGENOM" id="CLU_053282_0_0_9"/>
<dbReference type="PhylomeDB" id="Q7A2U9"/>
<dbReference type="Proteomes" id="UP000002481">
    <property type="component" value="Chromosome"/>
</dbReference>
<dbReference type="GO" id="GO:0003677">
    <property type="term" value="F:DNA binding"/>
    <property type="evidence" value="ECO:0007669"/>
    <property type="project" value="UniProtKB-UniRule"/>
</dbReference>
<dbReference type="GO" id="GO:0051301">
    <property type="term" value="P:cell division"/>
    <property type="evidence" value="ECO:0007669"/>
    <property type="project" value="UniProtKB-UniRule"/>
</dbReference>
<dbReference type="GO" id="GO:0043937">
    <property type="term" value="P:regulation of sporulation"/>
    <property type="evidence" value="ECO:0007669"/>
    <property type="project" value="InterPro"/>
</dbReference>
<dbReference type="FunFam" id="3.10.28.10:FF:000002">
    <property type="entry name" value="Probable cell division protein WhiA"/>
    <property type="match status" value="1"/>
</dbReference>
<dbReference type="Gene3D" id="3.10.28.10">
    <property type="entry name" value="Homing endonucleases"/>
    <property type="match status" value="1"/>
</dbReference>
<dbReference type="HAMAP" id="MF_01420">
    <property type="entry name" value="HTH_type_WhiA"/>
    <property type="match status" value="1"/>
</dbReference>
<dbReference type="InterPro" id="IPR027434">
    <property type="entry name" value="Homing_endonucl"/>
</dbReference>
<dbReference type="InterPro" id="IPR018478">
    <property type="entry name" value="Sporu_reg_WhiA_N_dom"/>
</dbReference>
<dbReference type="InterPro" id="IPR003802">
    <property type="entry name" value="Sporulation_regulator_WhiA"/>
</dbReference>
<dbReference type="InterPro" id="IPR023054">
    <property type="entry name" value="Sporulation_regulator_WhiA_C"/>
</dbReference>
<dbReference type="InterPro" id="IPR039518">
    <property type="entry name" value="WhiA_LAGLIDADG_dom"/>
</dbReference>
<dbReference type="NCBIfam" id="TIGR00647">
    <property type="entry name" value="DNA_bind_WhiA"/>
    <property type="match status" value="1"/>
</dbReference>
<dbReference type="PANTHER" id="PTHR37307">
    <property type="entry name" value="CELL DIVISION PROTEIN WHIA-RELATED"/>
    <property type="match status" value="1"/>
</dbReference>
<dbReference type="PANTHER" id="PTHR37307:SF1">
    <property type="entry name" value="CELL DIVISION PROTEIN WHIA-RELATED"/>
    <property type="match status" value="1"/>
</dbReference>
<dbReference type="Pfam" id="PF02650">
    <property type="entry name" value="HTH_WhiA"/>
    <property type="match status" value="1"/>
</dbReference>
<dbReference type="Pfam" id="PF14527">
    <property type="entry name" value="LAGLIDADG_WhiA"/>
    <property type="match status" value="1"/>
</dbReference>
<dbReference type="Pfam" id="PF10298">
    <property type="entry name" value="WhiA_N"/>
    <property type="match status" value="1"/>
</dbReference>
<dbReference type="SUPFAM" id="SSF55608">
    <property type="entry name" value="Homing endonucleases"/>
    <property type="match status" value="1"/>
</dbReference>
<accession>Q7A2U9</accession>
<reference key="1">
    <citation type="journal article" date="2001" name="Lancet">
        <title>Whole genome sequencing of meticillin-resistant Staphylococcus aureus.</title>
        <authorList>
            <person name="Kuroda M."/>
            <person name="Ohta T."/>
            <person name="Uchiyama I."/>
            <person name="Baba T."/>
            <person name="Yuzawa H."/>
            <person name="Kobayashi I."/>
            <person name="Cui L."/>
            <person name="Oguchi A."/>
            <person name="Aoki K."/>
            <person name="Nagai Y."/>
            <person name="Lian J.-Q."/>
            <person name="Ito T."/>
            <person name="Kanamori M."/>
            <person name="Matsumaru H."/>
            <person name="Maruyama A."/>
            <person name="Murakami H."/>
            <person name="Hosoyama A."/>
            <person name="Mizutani-Ui Y."/>
            <person name="Takahashi N.K."/>
            <person name="Sawano T."/>
            <person name="Inoue R."/>
            <person name="Kaito C."/>
            <person name="Sekimizu K."/>
            <person name="Hirakawa H."/>
            <person name="Kuhara S."/>
            <person name="Goto S."/>
            <person name="Yabuzaki J."/>
            <person name="Kanehisa M."/>
            <person name="Yamashita A."/>
            <person name="Oshima K."/>
            <person name="Furuya K."/>
            <person name="Yoshino C."/>
            <person name="Shiba T."/>
            <person name="Hattori M."/>
            <person name="Ogasawara N."/>
            <person name="Hayashi H."/>
            <person name="Hiramatsu K."/>
        </authorList>
    </citation>
    <scope>NUCLEOTIDE SEQUENCE [LARGE SCALE GENOMIC DNA]</scope>
    <source>
        <strain>Mu50 / ATCC 700699</strain>
    </source>
</reference>
<proteinExistence type="inferred from homology"/>
<organism>
    <name type="scientific">Staphylococcus aureus (strain Mu50 / ATCC 700699)</name>
    <dbReference type="NCBI Taxonomy" id="158878"/>
    <lineage>
        <taxon>Bacteria</taxon>
        <taxon>Bacillati</taxon>
        <taxon>Bacillota</taxon>
        <taxon>Bacilli</taxon>
        <taxon>Bacillales</taxon>
        <taxon>Staphylococcaceae</taxon>
        <taxon>Staphylococcus</taxon>
    </lineage>
</organism>
<gene>
    <name evidence="1" type="primary">whiA</name>
    <name type="ordered locus">SAV0767</name>
</gene>
<keyword id="KW-0131">Cell cycle</keyword>
<keyword id="KW-0132">Cell division</keyword>
<keyword id="KW-0238">DNA-binding</keyword>
<protein>
    <recommendedName>
        <fullName evidence="1">Probable cell division protein WhiA</fullName>
    </recommendedName>
</protein>